<reference key="1">
    <citation type="journal article" date="2005" name="Gene">
        <title>The first complete chloroplast genome sequence of a lycophyte, Huperzia lucidula (Lycopodiaceae).</title>
        <authorList>
            <person name="Wolf P.G."/>
            <person name="Karol K.G."/>
            <person name="Mandoli D.F."/>
            <person name="Kuehl J.V."/>
            <person name="Arumuganathan K."/>
            <person name="Ellis M.W."/>
            <person name="Mishler B.D."/>
            <person name="Kelch D.G."/>
            <person name="Olmstead R.G."/>
            <person name="Boore J.L."/>
        </authorList>
    </citation>
    <scope>NUCLEOTIDE SEQUENCE [LARGE SCALE GENOMIC DNA]</scope>
</reference>
<keyword id="KW-0150">Chloroplast</keyword>
<keyword id="KW-0472">Membrane</keyword>
<keyword id="KW-0520">NAD</keyword>
<keyword id="KW-0521">NADP</keyword>
<keyword id="KW-0934">Plastid</keyword>
<keyword id="KW-0618">Plastoquinone</keyword>
<keyword id="KW-0874">Quinone</keyword>
<keyword id="KW-0793">Thylakoid</keyword>
<keyword id="KW-1278">Translocase</keyword>
<keyword id="KW-0812">Transmembrane</keyword>
<keyword id="KW-1133">Transmembrane helix</keyword>
<keyword id="KW-0813">Transport</keyword>
<accession>Q5SCZ9</accession>
<dbReference type="EC" id="7.1.1.-"/>
<dbReference type="EMBL" id="AY660566">
    <property type="protein sequence ID" value="AAT80767.1"/>
    <property type="molecule type" value="Genomic_DNA"/>
</dbReference>
<dbReference type="RefSeq" id="YP_209571.1">
    <property type="nucleotide sequence ID" value="NC_006861.1"/>
</dbReference>
<dbReference type="SMR" id="Q5SCZ9"/>
<dbReference type="GeneID" id="3283728"/>
<dbReference type="GO" id="GO:0009535">
    <property type="term" value="C:chloroplast thylakoid membrane"/>
    <property type="evidence" value="ECO:0007669"/>
    <property type="project" value="UniProtKB-SubCell"/>
</dbReference>
<dbReference type="GO" id="GO:0008137">
    <property type="term" value="F:NADH dehydrogenase (ubiquinone) activity"/>
    <property type="evidence" value="ECO:0007669"/>
    <property type="project" value="InterPro"/>
</dbReference>
<dbReference type="GO" id="GO:0048038">
    <property type="term" value="F:quinone binding"/>
    <property type="evidence" value="ECO:0007669"/>
    <property type="project" value="UniProtKB-KW"/>
</dbReference>
<dbReference type="GO" id="GO:0042773">
    <property type="term" value="P:ATP synthesis coupled electron transport"/>
    <property type="evidence" value="ECO:0007669"/>
    <property type="project" value="InterPro"/>
</dbReference>
<dbReference type="GO" id="GO:0015990">
    <property type="term" value="P:electron transport coupled proton transport"/>
    <property type="evidence" value="ECO:0007669"/>
    <property type="project" value="TreeGrafter"/>
</dbReference>
<dbReference type="Gene3D" id="1.20.5.2700">
    <property type="match status" value="1"/>
</dbReference>
<dbReference type="InterPro" id="IPR002128">
    <property type="entry name" value="NADH_UbQ_OxRdtase_chlpt_su5_C"/>
</dbReference>
<dbReference type="InterPro" id="IPR018393">
    <property type="entry name" value="NADHpl_OxRdtase_5_subgr"/>
</dbReference>
<dbReference type="InterPro" id="IPR001750">
    <property type="entry name" value="ND/Mrp_TM"/>
</dbReference>
<dbReference type="InterPro" id="IPR003945">
    <property type="entry name" value="NU5C-like"/>
</dbReference>
<dbReference type="InterPro" id="IPR001516">
    <property type="entry name" value="Proton_antipo_N"/>
</dbReference>
<dbReference type="NCBIfam" id="TIGR01974">
    <property type="entry name" value="NDH_I_L"/>
    <property type="match status" value="1"/>
</dbReference>
<dbReference type="NCBIfam" id="NF005141">
    <property type="entry name" value="PRK06590.1"/>
    <property type="match status" value="1"/>
</dbReference>
<dbReference type="PANTHER" id="PTHR42829">
    <property type="entry name" value="NADH-UBIQUINONE OXIDOREDUCTASE CHAIN 5"/>
    <property type="match status" value="1"/>
</dbReference>
<dbReference type="PANTHER" id="PTHR42829:SF2">
    <property type="entry name" value="NADH-UBIQUINONE OXIDOREDUCTASE CHAIN 5"/>
    <property type="match status" value="1"/>
</dbReference>
<dbReference type="Pfam" id="PF01010">
    <property type="entry name" value="Proton_antipo_C"/>
    <property type="match status" value="1"/>
</dbReference>
<dbReference type="Pfam" id="PF00361">
    <property type="entry name" value="Proton_antipo_M"/>
    <property type="match status" value="1"/>
</dbReference>
<dbReference type="Pfam" id="PF00662">
    <property type="entry name" value="Proton_antipo_N"/>
    <property type="match status" value="1"/>
</dbReference>
<dbReference type="PRINTS" id="PR01434">
    <property type="entry name" value="NADHDHGNASE5"/>
</dbReference>
<dbReference type="PRINTS" id="PR01435">
    <property type="entry name" value="NPOXDRDTASE5"/>
</dbReference>
<organism>
    <name type="scientific">Huperzia lucidula</name>
    <name type="common">Shining clubmoss</name>
    <name type="synonym">Lycopodium lucidulum</name>
    <dbReference type="NCBI Taxonomy" id="37429"/>
    <lineage>
        <taxon>Eukaryota</taxon>
        <taxon>Viridiplantae</taxon>
        <taxon>Streptophyta</taxon>
        <taxon>Embryophyta</taxon>
        <taxon>Tracheophyta</taxon>
        <taxon>Lycopodiopsida</taxon>
        <taxon>Lycopodiales</taxon>
        <taxon>Lycopodiaceae</taxon>
        <taxon>Huperzioideae</taxon>
        <taxon>Huperzia</taxon>
    </lineage>
</organism>
<protein>
    <recommendedName>
        <fullName>NAD(P)H-quinone oxidoreductase subunit 5, chloroplastic</fullName>
        <ecNumber>7.1.1.-</ecNumber>
    </recommendedName>
    <alternativeName>
        <fullName>NAD(P)H dehydrogenase subunit 5</fullName>
    </alternativeName>
    <alternativeName>
        <fullName>NADH-plastoquinone oxidoreductase subunit 5</fullName>
    </alternativeName>
</protein>
<name>NU5C_HUPLU</name>
<proteinExistence type="inferred from homology"/>
<sequence>MESIYKYGWIIPLLPLVSSITIGLGLFFFPKATKSLRRTYAIISTLLLSIAMFISFDLLWQQIAGSPTYRYLWSWIPDQDVTLEVGYPIDPLTSIMLVLVTTIGVTVMIHSDSYMSHDQGYVRFFAYLSLSTASMLGLVISPNLIQIYIFRELVGMCSYLLIGFWFTRPSAANACQKAFITNRVGDFGLLLGTSGFYWITGSFKFEDLFERFNESLANHEVSLFLATPCALLFPLGPVAKSAQFPLHVWLPDAMEGPTPISAPIHAATMVAAGIFLVARMFPLFQTLPLVMSSISWVGGVTASLGATVALAQKDLKRVLAYSTMSQLGYMMLALGIGSYRAASFHLITHAYPKALSSPGSGSVIHSMEPIVGYCPDKSQNIALMGGLRKYVPITGTTFLLGTLSLCGIPPLACFWSKDEIIADSWLYFPILGWIARFTAGLTGFYTFRMYSLTLEGDFRANPSKNLISSYVSPWENSRFGTSSQKQTDSALPLAQNRIESFDPSENIQEFSDKNVKNSVSTQSSREEYSPHPKESDNTMLFPLLILTIPTLLVGFIGVPSYQEEMGPDLLSHWLDPSLSLSNQINYENWLLEFIANATVSVGTASLGIFTASILYGPIPFFPRDLRQKTDLQLEGILGHFSSLLYNWSYSRGYIDGYYNIVFIKGTRILAKIISFFDQWIIDGIVNGVGISGSFGGEGSRYGEGGRISYYLFGFISGTIILLLVVINYKHDFFP</sequence>
<geneLocation type="chloroplast"/>
<evidence type="ECO:0000250" key="1"/>
<evidence type="ECO:0000255" key="2"/>
<evidence type="ECO:0000256" key="3">
    <source>
        <dbReference type="SAM" id="MobiDB-lite"/>
    </source>
</evidence>
<evidence type="ECO:0000305" key="4"/>
<comment type="function">
    <text evidence="1">NDH shuttles electrons from NAD(P)H:plastoquinone, via FMN and iron-sulfur (Fe-S) centers, to quinones in the photosynthetic chain and possibly in a chloroplast respiratory chain. The immediate electron acceptor for the enzyme in this species is believed to be plastoquinone. Couples the redox reaction to proton translocation, and thus conserves the redox energy in a proton gradient (By similarity).</text>
</comment>
<comment type="catalytic activity">
    <reaction>
        <text>a plastoquinone + NADH + (n+1) H(+)(in) = a plastoquinol + NAD(+) + n H(+)(out)</text>
        <dbReference type="Rhea" id="RHEA:42608"/>
        <dbReference type="Rhea" id="RHEA-COMP:9561"/>
        <dbReference type="Rhea" id="RHEA-COMP:9562"/>
        <dbReference type="ChEBI" id="CHEBI:15378"/>
        <dbReference type="ChEBI" id="CHEBI:17757"/>
        <dbReference type="ChEBI" id="CHEBI:57540"/>
        <dbReference type="ChEBI" id="CHEBI:57945"/>
        <dbReference type="ChEBI" id="CHEBI:62192"/>
    </reaction>
</comment>
<comment type="catalytic activity">
    <reaction>
        <text>a plastoquinone + NADPH + (n+1) H(+)(in) = a plastoquinol + NADP(+) + n H(+)(out)</text>
        <dbReference type="Rhea" id="RHEA:42612"/>
        <dbReference type="Rhea" id="RHEA-COMP:9561"/>
        <dbReference type="Rhea" id="RHEA-COMP:9562"/>
        <dbReference type="ChEBI" id="CHEBI:15378"/>
        <dbReference type="ChEBI" id="CHEBI:17757"/>
        <dbReference type="ChEBI" id="CHEBI:57783"/>
        <dbReference type="ChEBI" id="CHEBI:58349"/>
        <dbReference type="ChEBI" id="CHEBI:62192"/>
    </reaction>
</comment>
<comment type="subunit">
    <text evidence="1">NDH is composed of at least 16 different subunits, 5 of which are encoded in the nucleus.</text>
</comment>
<comment type="subcellular location">
    <subcellularLocation>
        <location evidence="1">Plastid</location>
        <location evidence="1">Chloroplast thylakoid membrane</location>
        <topology evidence="1">Multi-pass membrane protein</topology>
    </subcellularLocation>
</comment>
<comment type="similarity">
    <text evidence="4">Belongs to the complex I subunit 5 family.</text>
</comment>
<gene>
    <name type="primary">ndhF</name>
</gene>
<feature type="chain" id="PRO_0000360939" description="NAD(P)H-quinone oxidoreductase subunit 5, chloroplastic">
    <location>
        <begin position="1"/>
        <end position="734"/>
    </location>
</feature>
<feature type="transmembrane region" description="Helical" evidence="2">
    <location>
        <begin position="9"/>
        <end position="29"/>
    </location>
</feature>
<feature type="transmembrane region" description="Helical" evidence="2">
    <location>
        <begin position="40"/>
        <end position="60"/>
    </location>
</feature>
<feature type="transmembrane region" description="Helical" evidence="2">
    <location>
        <begin position="89"/>
        <end position="109"/>
    </location>
</feature>
<feature type="transmembrane region" description="Helical" evidence="2">
    <location>
        <begin position="121"/>
        <end position="140"/>
    </location>
</feature>
<feature type="transmembrane region" description="Helical" evidence="2">
    <location>
        <begin position="144"/>
        <end position="166"/>
    </location>
</feature>
<feature type="transmembrane region" description="Helical" evidence="2">
    <location>
        <begin position="185"/>
        <end position="205"/>
    </location>
</feature>
<feature type="transmembrane region" description="Helical" evidence="2">
    <location>
        <begin position="219"/>
        <end position="239"/>
    </location>
</feature>
<feature type="transmembrane region" description="Helical" evidence="2">
    <location>
        <begin position="258"/>
        <end position="278"/>
    </location>
</feature>
<feature type="transmembrane region" description="Helical" evidence="2">
    <location>
        <begin position="289"/>
        <end position="311"/>
    </location>
</feature>
<feature type="transmembrane region" description="Helical" evidence="2">
    <location>
        <begin position="318"/>
        <end position="338"/>
    </location>
</feature>
<feature type="transmembrane region" description="Helical" evidence="2">
    <location>
        <begin position="395"/>
        <end position="415"/>
    </location>
</feature>
<feature type="transmembrane region" description="Helical" evidence="2">
    <location>
        <begin position="425"/>
        <end position="445"/>
    </location>
</feature>
<feature type="transmembrane region" description="Helical" evidence="2">
    <location>
        <begin position="539"/>
        <end position="559"/>
    </location>
</feature>
<feature type="transmembrane region" description="Helical" evidence="2">
    <location>
        <begin position="601"/>
        <end position="621"/>
    </location>
</feature>
<feature type="transmembrane region" description="Helical" evidence="2">
    <location>
        <begin position="707"/>
        <end position="727"/>
    </location>
</feature>
<feature type="region of interest" description="Disordered" evidence="3">
    <location>
        <begin position="512"/>
        <end position="534"/>
    </location>
</feature>
<feature type="compositionally biased region" description="Basic and acidic residues" evidence="3">
    <location>
        <begin position="524"/>
        <end position="534"/>
    </location>
</feature>